<organism>
    <name type="scientific">Anabaena sp. (strain L31)</name>
    <dbReference type="NCBI Taxonomy" id="29412"/>
    <lineage>
        <taxon>Bacteria</taxon>
        <taxon>Bacillati</taxon>
        <taxon>Cyanobacteriota</taxon>
        <taxon>Cyanophyceae</taxon>
        <taxon>Nostocales</taxon>
        <taxon>Nostocaceae</taxon>
        <taxon>Anabaena</taxon>
    </lineage>
</organism>
<proteinExistence type="evidence at protein level"/>
<keyword id="KW-0903">Direct protein sequencing</keyword>
<keyword id="KW-0324">Glycolysis</keyword>
<keyword id="KW-0456">Lyase</keyword>
<keyword id="KW-0479">Metal-binding</keyword>
<keyword id="KW-0862">Zinc</keyword>
<reference evidence="4" key="1">
    <citation type="submission" date="2001-10" db="UniProtKB">
        <authorList>
            <person name="Apte S.K."/>
            <person name="Uhlemann E."/>
            <person name="Schmid R."/>
            <person name="Altendorf K."/>
        </authorList>
    </citation>
    <scope>PROTEIN SEQUENCE</scope>
</reference>
<evidence type="ECO:0000250" key="1"/>
<evidence type="ECO:0000250" key="2">
    <source>
        <dbReference type="UniProtKB" id="P29271"/>
    </source>
</evidence>
<evidence type="ECO:0000255" key="3"/>
<evidence type="ECO:0000305" key="4"/>
<accession>P83155</accession>
<protein>
    <recommendedName>
        <fullName>Fructose-bisphosphate aldolase</fullName>
        <shortName>FBP aldolase</shortName>
        <shortName>FBPA</shortName>
        <ecNumber>4.1.2.13</ecNumber>
    </recommendedName>
    <alternativeName>
        <fullName>Fructose-1,6-bisphosphate aldolase</fullName>
    </alternativeName>
</protein>
<feature type="chain" id="PRO_0000262929" description="Fructose-bisphosphate aldolase">
    <location>
        <begin position="1"/>
        <end position="16" status="greater than"/>
    </location>
</feature>
<feature type="non-terminal residue">
    <location>
        <position position="16"/>
    </location>
</feature>
<dbReference type="EC" id="4.1.2.13"/>
<dbReference type="UniPathway" id="UPA00109">
    <property type="reaction ID" value="UER00183"/>
</dbReference>
<dbReference type="GO" id="GO:0004332">
    <property type="term" value="F:fructose-bisphosphate aldolase activity"/>
    <property type="evidence" value="ECO:0007669"/>
    <property type="project" value="UniProtKB-EC"/>
</dbReference>
<dbReference type="GO" id="GO:0046872">
    <property type="term" value="F:metal ion binding"/>
    <property type="evidence" value="ECO:0007669"/>
    <property type="project" value="UniProtKB-KW"/>
</dbReference>
<dbReference type="GO" id="GO:0006096">
    <property type="term" value="P:glycolytic process"/>
    <property type="evidence" value="ECO:0007669"/>
    <property type="project" value="UniProtKB-UniPathway"/>
</dbReference>
<comment type="function">
    <text evidence="1">Catalyzes the aldol condensation of dihydroxyacetone phosphate (DHAP or glycerone-phosphate) with glyceraldehyde 3-phosphate (G3P) to form fructose 1,6-bisphosphate (FBP) in gluconeogenesis and the reverse reaction in glycolysis.</text>
</comment>
<comment type="catalytic activity">
    <reaction evidence="2">
        <text>beta-D-fructose 1,6-bisphosphate = D-glyceraldehyde 3-phosphate + dihydroxyacetone phosphate</text>
        <dbReference type="Rhea" id="RHEA:14729"/>
        <dbReference type="ChEBI" id="CHEBI:32966"/>
        <dbReference type="ChEBI" id="CHEBI:57642"/>
        <dbReference type="ChEBI" id="CHEBI:59776"/>
        <dbReference type="EC" id="4.1.2.13"/>
    </reaction>
</comment>
<comment type="cofactor">
    <cofactor evidence="1">
        <name>Zn(2+)</name>
        <dbReference type="ChEBI" id="CHEBI:29105"/>
    </cofactor>
    <text evidence="1">Binds 2 Zn(2+) ions per subunit. One is catalytic and the other provides a structural contribution.</text>
</comment>
<comment type="pathway">
    <text>Carbohydrate degradation; glycolysis; D-glyceraldehyde 3-phosphate and glycerone phosphate from D-glucose: step 4/4.</text>
</comment>
<comment type="subunit">
    <text evidence="2">Homodimer.</text>
</comment>
<comment type="similarity">
    <text evidence="3">Belongs to the class II fructose-bisphosphate aldolase family.</text>
</comment>
<sequence length="16" mass="1702">ALVPLRLLLDHAAENG</sequence>
<name>ALF_ANASL</name>